<keyword id="KW-0028">Amino-acid biosynthesis</keyword>
<keyword id="KW-0067">ATP-binding</keyword>
<keyword id="KW-0963">Cytoplasm</keyword>
<keyword id="KW-0328">Glycosyltransferase</keyword>
<keyword id="KW-0368">Histidine biosynthesis</keyword>
<keyword id="KW-0547">Nucleotide-binding</keyword>
<keyword id="KW-1185">Reference proteome</keyword>
<keyword id="KW-0808">Transferase</keyword>
<protein>
    <recommendedName>
        <fullName evidence="1">ATP phosphoribosyltransferase</fullName>
        <shortName evidence="1">ATP-PRT</shortName>
        <shortName evidence="1">ATP-PRTase</shortName>
        <ecNumber evidence="1">2.4.2.17</ecNumber>
    </recommendedName>
</protein>
<sequence length="216" mass="23336">MTQQITLALSKGRIFEETLPLLAAAGIEVLEDPEKSRKLILPTSRPEVRVVLVRATDVPTYVQYGGADLGVAGKDSLIEHGGQGLFRPLDLKIAKCRVSVAVRADFDYREAVTQGSRLKVATKYTSIARDFFASKGVHVDLIKLYGSMELAPLTGLADAIVDLVSTGNTLKANNLVEVEQIMDISSHLVVNQAALKLKQAPLRRIIDAFASAVPQG</sequence>
<reference key="1">
    <citation type="submission" date="2009-01" db="EMBL/GenBank/DDBJ databases">
        <title>Complete sequence of Diaphorobacter sp. TPSY.</title>
        <authorList>
            <consortium name="US DOE Joint Genome Institute"/>
            <person name="Lucas S."/>
            <person name="Copeland A."/>
            <person name="Lapidus A."/>
            <person name="Glavina del Rio T."/>
            <person name="Tice H."/>
            <person name="Bruce D."/>
            <person name="Goodwin L."/>
            <person name="Pitluck S."/>
            <person name="Chertkov O."/>
            <person name="Brettin T."/>
            <person name="Detter J.C."/>
            <person name="Han C."/>
            <person name="Larimer F."/>
            <person name="Land M."/>
            <person name="Hauser L."/>
            <person name="Kyrpides N."/>
            <person name="Mikhailova N."/>
            <person name="Coates J.D."/>
        </authorList>
    </citation>
    <scope>NUCLEOTIDE SEQUENCE [LARGE SCALE GENOMIC DNA]</scope>
    <source>
        <strain>TPSY</strain>
    </source>
</reference>
<organism>
    <name type="scientific">Acidovorax ebreus (strain TPSY)</name>
    <name type="common">Diaphorobacter sp. (strain TPSY)</name>
    <dbReference type="NCBI Taxonomy" id="535289"/>
    <lineage>
        <taxon>Bacteria</taxon>
        <taxon>Pseudomonadati</taxon>
        <taxon>Pseudomonadota</taxon>
        <taxon>Betaproteobacteria</taxon>
        <taxon>Burkholderiales</taxon>
        <taxon>Comamonadaceae</taxon>
        <taxon>Diaphorobacter</taxon>
    </lineage>
</organism>
<accession>B9MDV1</accession>
<comment type="function">
    <text evidence="1">Catalyzes the condensation of ATP and 5-phosphoribose 1-diphosphate to form N'-(5'-phosphoribosyl)-ATP (PR-ATP). Has a crucial role in the pathway because the rate of histidine biosynthesis seems to be controlled primarily by regulation of HisG enzymatic activity.</text>
</comment>
<comment type="catalytic activity">
    <reaction evidence="1">
        <text>1-(5-phospho-beta-D-ribosyl)-ATP + diphosphate = 5-phospho-alpha-D-ribose 1-diphosphate + ATP</text>
        <dbReference type="Rhea" id="RHEA:18473"/>
        <dbReference type="ChEBI" id="CHEBI:30616"/>
        <dbReference type="ChEBI" id="CHEBI:33019"/>
        <dbReference type="ChEBI" id="CHEBI:58017"/>
        <dbReference type="ChEBI" id="CHEBI:73183"/>
        <dbReference type="EC" id="2.4.2.17"/>
    </reaction>
</comment>
<comment type="pathway">
    <text evidence="1">Amino-acid biosynthesis; L-histidine biosynthesis; L-histidine from 5-phospho-alpha-D-ribose 1-diphosphate: step 1/9.</text>
</comment>
<comment type="subunit">
    <text evidence="1">Heteromultimer composed of HisG and HisZ subunits.</text>
</comment>
<comment type="subcellular location">
    <subcellularLocation>
        <location evidence="1">Cytoplasm</location>
    </subcellularLocation>
</comment>
<comment type="domain">
    <text>Lacks the C-terminal regulatory region which is replaced by HisZ.</text>
</comment>
<comment type="similarity">
    <text evidence="1">Belongs to the ATP phosphoribosyltransferase family. Short subfamily.</text>
</comment>
<evidence type="ECO:0000255" key="1">
    <source>
        <dbReference type="HAMAP-Rule" id="MF_01018"/>
    </source>
</evidence>
<feature type="chain" id="PRO_1000213266" description="ATP phosphoribosyltransferase">
    <location>
        <begin position="1"/>
        <end position="216"/>
    </location>
</feature>
<proteinExistence type="inferred from homology"/>
<dbReference type="EC" id="2.4.2.17" evidence="1"/>
<dbReference type="EMBL" id="CP001392">
    <property type="protein sequence ID" value="ACM32205.1"/>
    <property type="molecule type" value="Genomic_DNA"/>
</dbReference>
<dbReference type="RefSeq" id="WP_011804208.1">
    <property type="nucleotide sequence ID" value="NC_011992.1"/>
</dbReference>
<dbReference type="SMR" id="B9MDV1"/>
<dbReference type="GeneID" id="84682714"/>
<dbReference type="KEGG" id="dia:Dtpsy_0726"/>
<dbReference type="eggNOG" id="COG0040">
    <property type="taxonomic scope" value="Bacteria"/>
</dbReference>
<dbReference type="HOGENOM" id="CLU_038115_2_0_4"/>
<dbReference type="UniPathway" id="UPA00031">
    <property type="reaction ID" value="UER00006"/>
</dbReference>
<dbReference type="Proteomes" id="UP000000450">
    <property type="component" value="Chromosome"/>
</dbReference>
<dbReference type="GO" id="GO:0005737">
    <property type="term" value="C:cytoplasm"/>
    <property type="evidence" value="ECO:0007669"/>
    <property type="project" value="UniProtKB-SubCell"/>
</dbReference>
<dbReference type="GO" id="GO:0005524">
    <property type="term" value="F:ATP binding"/>
    <property type="evidence" value="ECO:0007669"/>
    <property type="project" value="UniProtKB-KW"/>
</dbReference>
<dbReference type="GO" id="GO:0003879">
    <property type="term" value="F:ATP phosphoribosyltransferase activity"/>
    <property type="evidence" value="ECO:0007669"/>
    <property type="project" value="UniProtKB-UniRule"/>
</dbReference>
<dbReference type="GO" id="GO:0000105">
    <property type="term" value="P:L-histidine biosynthetic process"/>
    <property type="evidence" value="ECO:0007669"/>
    <property type="project" value="UniProtKB-UniRule"/>
</dbReference>
<dbReference type="CDD" id="cd13595">
    <property type="entry name" value="PBP2_HisGs"/>
    <property type="match status" value="1"/>
</dbReference>
<dbReference type="FunFam" id="3.40.190.10:FF:000008">
    <property type="entry name" value="ATP phosphoribosyltransferase"/>
    <property type="match status" value="1"/>
</dbReference>
<dbReference type="Gene3D" id="3.40.190.10">
    <property type="entry name" value="Periplasmic binding protein-like II"/>
    <property type="match status" value="2"/>
</dbReference>
<dbReference type="HAMAP" id="MF_01018">
    <property type="entry name" value="HisG_Short"/>
    <property type="match status" value="1"/>
</dbReference>
<dbReference type="InterPro" id="IPR013820">
    <property type="entry name" value="ATP_PRibTrfase_cat"/>
</dbReference>
<dbReference type="InterPro" id="IPR018198">
    <property type="entry name" value="ATP_PRibTrfase_CS"/>
</dbReference>
<dbReference type="InterPro" id="IPR001348">
    <property type="entry name" value="ATP_PRibTrfase_HisG"/>
</dbReference>
<dbReference type="InterPro" id="IPR024893">
    <property type="entry name" value="ATP_PRibTrfase_HisG_short"/>
</dbReference>
<dbReference type="NCBIfam" id="TIGR00070">
    <property type="entry name" value="hisG"/>
    <property type="match status" value="1"/>
</dbReference>
<dbReference type="PANTHER" id="PTHR21403:SF8">
    <property type="entry name" value="ATP PHOSPHORIBOSYLTRANSFERASE"/>
    <property type="match status" value="1"/>
</dbReference>
<dbReference type="PANTHER" id="PTHR21403">
    <property type="entry name" value="ATP PHOSPHORIBOSYLTRANSFERASE ATP-PRTASE"/>
    <property type="match status" value="1"/>
</dbReference>
<dbReference type="Pfam" id="PF01634">
    <property type="entry name" value="HisG"/>
    <property type="match status" value="1"/>
</dbReference>
<dbReference type="SUPFAM" id="SSF53850">
    <property type="entry name" value="Periplasmic binding protein-like II"/>
    <property type="match status" value="1"/>
</dbReference>
<dbReference type="PROSITE" id="PS01316">
    <property type="entry name" value="ATP_P_PHORIBOSYLTR"/>
    <property type="match status" value="1"/>
</dbReference>
<gene>
    <name evidence="1" type="primary">hisG</name>
    <name type="ordered locus">Dtpsy_0726</name>
</gene>
<name>HIS1_ACIET</name>